<name>OTU7B_MOUSE</name>
<proteinExistence type="evidence at protein level"/>
<comment type="function">
    <text evidence="2 7 8">Negative regulator of the non-canonical NF-kappa-B pathway that acts by mediating deubiquitination of TRAF3, an inhibitor of the NF-kappa-B pathway, thereby acting as a negative regulator of B-cell responses (PubMed:23334419). In response to non-canonical NF-kappa-B stimuli, deubiquitinates 'Lys-48'-linked polyubiquitin chains of TRAF3, preventing TRAF3 proteolysis and over-activation of non-canonical NF-kappa-B (PubMed:23334419). Negatively regulates mucosal immunity against infections (PubMed:23334419). Deubiquitinates ZAP70, and thereby regulates T cell receptor (TCR) signaling that leads to the activation of NF-kappa-B (PubMed:26903241). Plays a role in T cell homeostasis and is required for normal T cell responses, including production of IFNG and IL2 (PubMed:26903241). Mediates deubiquitination of EGFR (By similarity). Has deubiquitinating activity toward 'Lys-11', 'Lys-48' and 'Lys-63'-linked polyubiquitin chains (By similarity). Has a much higher catalytic rate with 'Lys-11'-linked polyubiquitin chains (in vitro); however the physiological significance of these data are unsure (By similarity). Hydrolyzes both linear and branched forms of polyubiquitin (By similarity). Acts as a regulator of mTORC1 and mTORC2 assembly by mediating 'Lys-63'-linked deubiquitination of MLST8, thereby promoting assembly of the mTORC2 complex, while inibiting formation of the mTORC1 complex (By similarity).</text>
</comment>
<comment type="catalytic activity">
    <reaction evidence="7">
        <text>Thiol-dependent hydrolysis of ester, thioester, amide, peptide and isopeptide bonds formed by the C-terminal Gly of ubiquitin (a 76-residue protein attached to proteins as an intracellular targeting signal).</text>
        <dbReference type="EC" id="3.4.19.12"/>
    </reaction>
</comment>
<comment type="activity regulation">
    <text evidence="2">Deubiquitinase activity is inhibited following interaction with PARK7.</text>
</comment>
<comment type="subunit">
    <text evidence="2 7 8">Interacts with TRAF6. Interacts with PARK7, leading to inhibit deubiquitinase activity. Interacts with EGFR, ITCH and NEDD4 (By similarity). Interacts with TRAF3 (PubMed:23334419). Interacts with ZAP70 in activated T cells, but not in resting T cells (PubMed:26903241).</text>
</comment>
<comment type="interaction">
    <interactant intactId="EBI-3454264">
        <id>B2RUR8</id>
    </interactant>
    <interactant intactId="EBI-525714">
        <id>P25942</id>
        <label>CD40</label>
    </interactant>
    <organismsDiffer>true</organismsDiffer>
    <experiments>2</experiments>
</comment>
<comment type="subcellular location">
    <subcellularLocation>
        <location evidence="2">Cytoplasm</location>
    </subcellularLocation>
    <subcellularLocation>
        <location evidence="2">Nucleus</location>
    </subcellularLocation>
    <text evidence="2">Shuttles be cytoplasm and the nucleus in a XPO1/CRM1-dependent manner.</text>
</comment>
<comment type="domain">
    <text evidence="2">The protein undergoes a significant conformation change upon binding to ubiquitinated substrates. The loop that precedes the active site is in an autoinhibitory conformation in the apoprotein. Ubiquitin binding leads to a conformation change; the loop is stabilized in a catalytically competent conformation with the result that the active site Cys can form the reaction state intermediate.</text>
</comment>
<comment type="PTM">
    <text evidence="2">Phosphorylated by EGFR.</text>
</comment>
<comment type="disruption phenotype">
    <text evidence="7 8">No visible phenotype in neonates (PubMed:26903241). Mice do not show obvious defects in survival, except a moderately reduced body weight (PubMed:23334419). They however display hyperactivation of non-canonical NF-kappa-B without affecting canonical NF-kappa-B activation. Mice show B-cell hyper-responsiveness to antigens, lymphoid follicular hyperplasia in the intestinal mucosa and elevated host-defense ability against an intestinal bacterial pathogen, Citrobacter rodentium (PubMed:23334419). At 12 months after birth, mutant mice display impaired T cell homeostasis with increased numbers of naive T cells and reduced numbers of Th1 memory-like T cells (PubMed:26903241). Young adults that have no overt change in T cell homeostasis still show impaired production of effector T cells in response to repeated stimulation with an antigen and an impaired defense against infection by L.monocytogenes (PubMed:26903241). Conversely, mutant mice are less susceptible to experimentally induced autoimmune encephalitis (PubMed:26903241).</text>
</comment>
<comment type="similarity">
    <text evidence="9">Belongs to the peptidase C64 family.</text>
</comment>
<comment type="sequence caution" evidence="9">
    <conflict type="miscellaneous discrepancy">
        <sequence resource="EMBL-CDS" id="AAH37040"/>
    </conflict>
    <text>Contaminating sequence. Potential poly-A sequence.</text>
</comment>
<feature type="chain" id="PRO_0000421819" description="OTU domain-containing protein 7B">
    <location>
        <begin position="1"/>
        <end position="840"/>
    </location>
</feature>
<feature type="domain" description="OTU" evidence="4">
    <location>
        <begin position="183"/>
        <end position="365"/>
    </location>
</feature>
<feature type="zinc finger region" description="A20-type" evidence="5">
    <location>
        <begin position="793"/>
        <end position="828"/>
    </location>
</feature>
<feature type="region of interest" description="Disordered" evidence="6">
    <location>
        <begin position="49"/>
        <end position="88"/>
    </location>
</feature>
<feature type="region of interest" description="TRAF-binding" evidence="1">
    <location>
        <begin position="152"/>
        <end position="401"/>
    </location>
</feature>
<feature type="region of interest" description="Catalytic" evidence="1">
    <location>
        <begin position="167"/>
        <end position="440"/>
    </location>
</feature>
<feature type="region of interest" description="Regulatory loop" evidence="2">
    <location>
        <begin position="187"/>
        <end position="193"/>
    </location>
</feature>
<feature type="region of interest" description="Disordered" evidence="6">
    <location>
        <begin position="440"/>
        <end position="592"/>
    </location>
</feature>
<feature type="region of interest" description="Disordered" evidence="6">
    <location>
        <begin position="653"/>
        <end position="710"/>
    </location>
</feature>
<feature type="short sequence motif" description="Nuclear localization signal" evidence="3">
    <location>
        <begin position="483"/>
        <end position="498"/>
    </location>
</feature>
<feature type="compositionally biased region" description="Basic and acidic residues" evidence="6">
    <location>
        <begin position="65"/>
        <end position="77"/>
    </location>
</feature>
<feature type="compositionally biased region" description="Polar residues" evidence="6">
    <location>
        <begin position="440"/>
        <end position="452"/>
    </location>
</feature>
<feature type="compositionally biased region" description="Basic and acidic residues" evidence="6">
    <location>
        <begin position="456"/>
        <end position="471"/>
    </location>
</feature>
<feature type="compositionally biased region" description="Basic and acidic residues" evidence="6">
    <location>
        <begin position="488"/>
        <end position="500"/>
    </location>
</feature>
<feature type="compositionally biased region" description="Gly residues" evidence="6">
    <location>
        <begin position="531"/>
        <end position="541"/>
    </location>
</feature>
<feature type="active site" evidence="1">
    <location>
        <position position="191"/>
    </location>
</feature>
<feature type="active site" description="Nucleophile" evidence="7">
    <location>
        <position position="194"/>
    </location>
</feature>
<feature type="active site" description="Proton acceptor" evidence="7">
    <location>
        <position position="358"/>
    </location>
</feature>
<feature type="binding site" evidence="5">
    <location>
        <position position="799"/>
    </location>
    <ligand>
        <name>Zn(2+)</name>
        <dbReference type="ChEBI" id="CHEBI:29105"/>
    </ligand>
</feature>
<feature type="binding site" evidence="5">
    <location>
        <position position="804"/>
    </location>
    <ligand>
        <name>Zn(2+)</name>
        <dbReference type="ChEBI" id="CHEBI:29105"/>
    </ligand>
</feature>
<feature type="binding site" evidence="5">
    <location>
        <position position="816"/>
    </location>
    <ligand>
        <name>Zn(2+)</name>
        <dbReference type="ChEBI" id="CHEBI:29105"/>
    </ligand>
</feature>
<feature type="binding site" evidence="5">
    <location>
        <position position="819"/>
    </location>
    <ligand>
        <name>Zn(2+)</name>
        <dbReference type="ChEBI" id="CHEBI:29105"/>
    </ligand>
</feature>
<feature type="site" description="Stabilizes the conformation of the regulatory loop" evidence="2">
    <location>
        <position position="197"/>
    </location>
</feature>
<feature type="modified residue" description="Phosphoserine" evidence="10">
    <location>
        <position position="100"/>
    </location>
</feature>
<feature type="modified residue" description="Phosphoserine" evidence="10">
    <location>
        <position position="464"/>
    </location>
</feature>
<feature type="modified residue" description="Phosphoserine" evidence="10">
    <location>
        <position position="467"/>
    </location>
</feature>
<feature type="modified residue" description="Phosphoserine" evidence="10">
    <location>
        <position position="471"/>
    </location>
</feature>
<feature type="modified residue" description="Phosphothreonine" evidence="10">
    <location>
        <position position="730"/>
    </location>
</feature>
<feature type="mutagenesis site" description="Loss of deubiquitinating activity; when associated with R-358." evidence="7">
    <original>C</original>
    <variation>S</variation>
    <location>
        <position position="194"/>
    </location>
</feature>
<feature type="mutagenesis site" description="Loss of deubiquitinating activity; when associated with S-194." evidence="7">
    <original>H</original>
    <variation>R</variation>
    <location>
        <position position="358"/>
    </location>
</feature>
<sequence>MTLDMDAVLSDFVRSTGAEPGLARDLLEGKNWDVSAALSDFEQLRQVHAGNLSPPFSGGSTCPKTPEKGGSDREPTRPSRPILQRQDDVIQEKRLSRGISHASSSIVSLARSHVSSNGGGGGSSEHPLEMPICAFQLPDLTVYKEDFRSFIERDLIEQSMLVALEQAGRLNWWVSMDSTCQRLLPLATTGDGNCLLHAASLGMWGFHDRDLVLRKALYALMEKGVEKEALRRRWRWQQTQQNKESGLVYTEDEWQKEWNELIKLASSEPRMHLGSNGASGGGVESSEEPVYESLEEFHVFVLAHVLKRPIVVVADTMLRDSGGEAFAPIPFGGIYLPLEVPASQCHRSPLVLAYDQAHFSALVSMEQKESAKEQAVIPLTDSEHKLLPLHFAVDPGKGWEWGKDDNDNVRLASIILSLEVKLHLLHSYMNVKWIPLSSDSQAPLAQPESPTASAGDEPRSTPESGESDKESVGSSSLGNEGSRRKEKSKRDREKDKKRADSVANKLGSFGKTLGSKLKKNMGGLMHSKGPKPGGLGSGSGISSGTETLEKKKKNNTLKSWKGGKEEAAGDGPVSEKPPSESVGNGGSKYSQEVMQSLSTMRIAMQGEGKYIFVGTLKMGHRHQYQEEMIQRYLADAEERFLAEQKQKEVERKIMNGGLVSGPPPAKKPEPDGGEDQPSDSPAEPKAMAFSTAYPGGFTIPRPSGGGVHCQEPRRQLAGGPCVGGLPSYATFPRQYPGRPYPHQDNIPALEPGKDGVHRGALLPPQFRVADSYSNGYREPPEPDGWAGAPRGLPPTQTKCKQPNCSFYGHPETNNLCSCCYREELRRREREPGGELLAHRF</sequence>
<reference key="1">
    <citation type="journal article" date="2009" name="PLoS Biol.">
        <title>Lineage-specific biology revealed by a finished genome assembly of the mouse.</title>
        <authorList>
            <person name="Church D.M."/>
            <person name="Goodstadt L."/>
            <person name="Hillier L.W."/>
            <person name="Zody M.C."/>
            <person name="Goldstein S."/>
            <person name="She X."/>
            <person name="Bult C.J."/>
            <person name="Agarwala R."/>
            <person name="Cherry J.L."/>
            <person name="DiCuccio M."/>
            <person name="Hlavina W."/>
            <person name="Kapustin Y."/>
            <person name="Meric P."/>
            <person name="Maglott D."/>
            <person name="Birtle Z."/>
            <person name="Marques A.C."/>
            <person name="Graves T."/>
            <person name="Zhou S."/>
            <person name="Teague B."/>
            <person name="Potamousis K."/>
            <person name="Churas C."/>
            <person name="Place M."/>
            <person name="Herschleb J."/>
            <person name="Runnheim R."/>
            <person name="Forrest D."/>
            <person name="Amos-Landgraf J."/>
            <person name="Schwartz D.C."/>
            <person name="Cheng Z."/>
            <person name="Lindblad-Toh K."/>
            <person name="Eichler E.E."/>
            <person name="Ponting C.P."/>
        </authorList>
    </citation>
    <scope>NUCLEOTIDE SEQUENCE [LARGE SCALE GENOMIC DNA]</scope>
    <source>
        <strain>C57BL/6J</strain>
    </source>
</reference>
<reference key="2">
    <citation type="submission" date="2005-07" db="EMBL/GenBank/DDBJ databases">
        <authorList>
            <person name="Mural R.J."/>
            <person name="Adams M.D."/>
            <person name="Myers E.W."/>
            <person name="Smith H.O."/>
            <person name="Venter J.C."/>
        </authorList>
    </citation>
    <scope>NUCLEOTIDE SEQUENCE [LARGE SCALE GENOMIC DNA]</scope>
</reference>
<reference key="3">
    <citation type="journal article" date="2004" name="Genome Res.">
        <title>The status, quality, and expansion of the NIH full-length cDNA project: the Mammalian Gene Collection (MGC).</title>
        <authorList>
            <consortium name="The MGC Project Team"/>
        </authorList>
    </citation>
    <scope>NUCLEOTIDE SEQUENCE [LARGE SCALE MRNA]</scope>
    <source>
        <tissue>Brain</tissue>
        <tissue>Eye</tissue>
    </source>
</reference>
<reference key="4">
    <citation type="journal article" date="2007" name="Proc. Natl. Acad. Sci. U.S.A.">
        <title>Large-scale phosphorylation analysis of mouse liver.</title>
        <authorList>
            <person name="Villen J."/>
            <person name="Beausoleil S.A."/>
            <person name="Gerber S.A."/>
            <person name="Gygi S.P."/>
        </authorList>
    </citation>
    <scope>IDENTIFICATION BY MASS SPECTROMETRY [LARGE SCALE ANALYSIS]</scope>
    <source>
        <tissue>Liver</tissue>
    </source>
</reference>
<reference key="5">
    <citation type="journal article" date="2010" name="Cell">
        <title>A tissue-specific atlas of mouse protein phosphorylation and expression.</title>
        <authorList>
            <person name="Huttlin E.L."/>
            <person name="Jedrychowski M.P."/>
            <person name="Elias J.E."/>
            <person name="Goswami T."/>
            <person name="Rad R."/>
            <person name="Beausoleil S.A."/>
            <person name="Villen J."/>
            <person name="Haas W."/>
            <person name="Sowa M.E."/>
            <person name="Gygi S.P."/>
        </authorList>
    </citation>
    <scope>PHOSPHORYLATION [LARGE SCALE ANALYSIS] AT SER-100; SER-464; SER-467; SER-471 AND THR-730</scope>
    <scope>IDENTIFICATION BY MASS SPECTROMETRY [LARGE SCALE ANALYSIS]</scope>
    <source>
        <tissue>Brain</tissue>
        <tissue>Brown adipose tissue</tissue>
        <tissue>Heart</tissue>
        <tissue>Kidney</tissue>
        <tissue>Lung</tissue>
        <tissue>Pancreas</tissue>
        <tissue>Spleen</tissue>
        <tissue>Testis</tissue>
    </source>
</reference>
<reference key="6">
    <citation type="journal article" date="2013" name="Nature">
        <title>OTUD7B controls non-canonical NF-kappaB activation through deubiquitination of TRAF3.</title>
        <authorList>
            <person name="Hu H."/>
            <person name="Brittain G.C."/>
            <person name="Chang J.H."/>
            <person name="Puebla-Osorio N."/>
            <person name="Jin J."/>
            <person name="Zal A."/>
            <person name="Xiao Y."/>
            <person name="Cheng X."/>
            <person name="Chang M."/>
            <person name="Fu Y.X."/>
            <person name="Zal T."/>
            <person name="Zhu C."/>
            <person name="Sun S.C."/>
        </authorList>
    </citation>
    <scope>FUNCTION</scope>
    <scope>CATALYTIC ACTIVITY</scope>
    <scope>DISRUPTION PHENOTYPE</scope>
    <scope>INTERACTION WITH TRAF3</scope>
    <scope>MUTAGENESIS OF CYS-194 AND HIS-358</scope>
    <scope>ACTIVE SITE</scope>
</reference>
<reference key="7">
    <citation type="journal article" date="2016" name="J. Exp. Med.">
        <title>Otud7b facilitates T cell activation and inflammatory responses by regulating Zap70 ubiquitination.</title>
        <authorList>
            <person name="Hu H."/>
            <person name="Wang H."/>
            <person name="Xiao Y."/>
            <person name="Jin J."/>
            <person name="Chang J.H."/>
            <person name="Zou Q."/>
            <person name="Xie X."/>
            <person name="Cheng X."/>
            <person name="Sun S.C."/>
        </authorList>
    </citation>
    <scope>DISRUPTION PHENOTYPE</scope>
    <scope>FUNCTION</scope>
    <scope>INTERACTION WITH ZAP70</scope>
</reference>
<evidence type="ECO:0000250" key="1"/>
<evidence type="ECO:0000250" key="2">
    <source>
        <dbReference type="UniProtKB" id="Q6GQQ9"/>
    </source>
</evidence>
<evidence type="ECO:0000255" key="3"/>
<evidence type="ECO:0000255" key="4">
    <source>
        <dbReference type="PROSITE-ProRule" id="PRU00139"/>
    </source>
</evidence>
<evidence type="ECO:0000255" key="5">
    <source>
        <dbReference type="PROSITE-ProRule" id="PRU00451"/>
    </source>
</evidence>
<evidence type="ECO:0000256" key="6">
    <source>
        <dbReference type="SAM" id="MobiDB-lite"/>
    </source>
</evidence>
<evidence type="ECO:0000269" key="7">
    <source>
    </source>
</evidence>
<evidence type="ECO:0000269" key="8">
    <source>
    </source>
</evidence>
<evidence type="ECO:0000305" key="9"/>
<evidence type="ECO:0007744" key="10">
    <source>
    </source>
</evidence>
<protein>
    <recommendedName>
        <fullName>OTU domain-containing protein 7B</fullName>
        <ecNumber evidence="7">3.4.19.12</ecNumber>
    </recommendedName>
    <alternativeName>
        <fullName>Cellular zinc finger anti-NF-kappa-B protein</fullName>
    </alternativeName>
    <alternativeName>
        <fullName>Zinc finger A20 domain-containing protein 1</fullName>
    </alternativeName>
    <alternativeName>
        <fullName evidence="9">Zinc finger protein Cezanne</fullName>
    </alternativeName>
</protein>
<dbReference type="EC" id="3.4.19.12" evidence="7"/>
<dbReference type="EMBL" id="AC092094">
    <property type="status" value="NOT_ANNOTATED_CDS"/>
    <property type="molecule type" value="Genomic_DNA"/>
</dbReference>
<dbReference type="EMBL" id="CH466620">
    <property type="protein sequence ID" value="EDL38862.1"/>
    <property type="molecule type" value="Genomic_DNA"/>
</dbReference>
<dbReference type="EMBL" id="BC141397">
    <property type="protein sequence ID" value="AAI41398.1"/>
    <property type="molecule type" value="mRNA"/>
</dbReference>
<dbReference type="EMBL" id="BC037040">
    <property type="protein sequence ID" value="AAH37040.1"/>
    <property type="status" value="ALT_SEQ"/>
    <property type="molecule type" value="mRNA"/>
</dbReference>
<dbReference type="EMBL" id="BC141398">
    <property type="protein sequence ID" value="AAI41399.1"/>
    <property type="molecule type" value="mRNA"/>
</dbReference>
<dbReference type="CCDS" id="CCDS17629.1"/>
<dbReference type="RefSeq" id="NP_001020784.1">
    <property type="nucleotide sequence ID" value="NM_001025613.1"/>
</dbReference>
<dbReference type="RefSeq" id="NP_001020785.1">
    <property type="nucleotide sequence ID" value="NM_001025614.1"/>
</dbReference>
<dbReference type="RefSeq" id="XP_006501448.1">
    <property type="nucleotide sequence ID" value="XM_006501385.4"/>
</dbReference>
<dbReference type="RefSeq" id="XP_006501449.1">
    <property type="nucleotide sequence ID" value="XM_006501386.3"/>
</dbReference>
<dbReference type="RefSeq" id="XP_006501452.1">
    <property type="nucleotide sequence ID" value="XM_006501389.4"/>
</dbReference>
<dbReference type="RefSeq" id="XP_017175035.1">
    <property type="nucleotide sequence ID" value="XM_017319546.1"/>
</dbReference>
<dbReference type="RefSeq" id="XP_017175036.1">
    <property type="nucleotide sequence ID" value="XM_017319547.1"/>
</dbReference>
<dbReference type="RefSeq" id="XP_036018961.1">
    <property type="nucleotide sequence ID" value="XM_036163068.1"/>
</dbReference>
<dbReference type="RefSeq" id="XP_036018963.1">
    <property type="nucleotide sequence ID" value="XM_036163070.1"/>
</dbReference>
<dbReference type="SMR" id="B2RUR8"/>
<dbReference type="BioGRID" id="230871">
    <property type="interactions" value="7"/>
</dbReference>
<dbReference type="DIP" id="DIP-60128N"/>
<dbReference type="FunCoup" id="B2RUR8">
    <property type="interactions" value="2733"/>
</dbReference>
<dbReference type="IntAct" id="B2RUR8">
    <property type="interactions" value="5"/>
</dbReference>
<dbReference type="STRING" id="10090.ENSMUSP00000088291"/>
<dbReference type="MEROPS" id="C64.001"/>
<dbReference type="GlyGen" id="B2RUR8">
    <property type="glycosylation" value="1 site, 1 O-linked glycan (1 site)"/>
</dbReference>
<dbReference type="iPTMnet" id="B2RUR8"/>
<dbReference type="PhosphoSitePlus" id="B2RUR8"/>
<dbReference type="jPOST" id="B2RUR8"/>
<dbReference type="PaxDb" id="10090-ENSMUSP00000088291"/>
<dbReference type="PeptideAtlas" id="B2RUR8"/>
<dbReference type="ProteomicsDB" id="294404"/>
<dbReference type="Pumba" id="B2RUR8"/>
<dbReference type="Antibodypedia" id="72463">
    <property type="antibodies" value="233 antibodies from 30 providers"/>
</dbReference>
<dbReference type="DNASU" id="229603"/>
<dbReference type="Ensembl" id="ENSMUST00000035519.12">
    <property type="protein sequence ID" value="ENSMUSP00000046413.6"/>
    <property type="gene ID" value="ENSMUSG00000038495.15"/>
</dbReference>
<dbReference type="Ensembl" id="ENSMUST00000090785.9">
    <property type="protein sequence ID" value="ENSMUSP00000088291.3"/>
    <property type="gene ID" value="ENSMUSG00000038495.15"/>
</dbReference>
<dbReference type="Ensembl" id="ENSMUST00000098849.3">
    <property type="protein sequence ID" value="ENSMUSP00000096449.3"/>
    <property type="gene ID" value="ENSMUSG00000038495.15"/>
</dbReference>
<dbReference type="GeneID" id="229603"/>
<dbReference type="KEGG" id="mmu:229603"/>
<dbReference type="UCSC" id="uc008qma.1">
    <property type="organism name" value="mouse"/>
</dbReference>
<dbReference type="AGR" id="MGI:2654703"/>
<dbReference type="CTD" id="56957"/>
<dbReference type="MGI" id="MGI:2654703">
    <property type="gene designation" value="Otud7b"/>
</dbReference>
<dbReference type="VEuPathDB" id="HostDB:ENSMUSG00000038495"/>
<dbReference type="eggNOG" id="KOG4345">
    <property type="taxonomic scope" value="Eukaryota"/>
</dbReference>
<dbReference type="GeneTree" id="ENSGT00940000159172"/>
<dbReference type="HOGENOM" id="CLU_013263_0_0_1"/>
<dbReference type="InParanoid" id="B2RUR8"/>
<dbReference type="OMA" id="KEWEWGK"/>
<dbReference type="OrthoDB" id="10064699at2759"/>
<dbReference type="PhylomeDB" id="B2RUR8"/>
<dbReference type="TreeFam" id="TF323312"/>
<dbReference type="Reactome" id="R-MMU-5357786">
    <property type="pathway name" value="TNFR1-induced proapoptotic signaling"/>
</dbReference>
<dbReference type="Reactome" id="R-MMU-5357905">
    <property type="pathway name" value="Regulation of TNFR1 signaling"/>
</dbReference>
<dbReference type="Reactome" id="R-MMU-5357956">
    <property type="pathway name" value="TNFR1-induced NF-kappa-B signaling pathway"/>
</dbReference>
<dbReference type="Reactome" id="R-MMU-5689896">
    <property type="pathway name" value="Ovarian tumor domain proteases"/>
</dbReference>
<dbReference type="BioGRID-ORCS" id="229603">
    <property type="hits" value="2 hits in 78 CRISPR screens"/>
</dbReference>
<dbReference type="ChiTaRS" id="Otud7b">
    <property type="organism name" value="mouse"/>
</dbReference>
<dbReference type="PRO" id="PR:B2RUR8"/>
<dbReference type="Proteomes" id="UP000000589">
    <property type="component" value="Chromosome 3"/>
</dbReference>
<dbReference type="RNAct" id="B2RUR8">
    <property type="molecule type" value="protein"/>
</dbReference>
<dbReference type="Bgee" id="ENSMUSG00000038495">
    <property type="expression patterns" value="Expressed in blood and 245 other cell types or tissues"/>
</dbReference>
<dbReference type="ExpressionAtlas" id="B2RUR8">
    <property type="expression patterns" value="baseline and differential"/>
</dbReference>
<dbReference type="GO" id="GO:0005737">
    <property type="term" value="C:cytoplasm"/>
    <property type="evidence" value="ECO:0000314"/>
    <property type="project" value="MGI"/>
</dbReference>
<dbReference type="GO" id="GO:0005634">
    <property type="term" value="C:nucleus"/>
    <property type="evidence" value="ECO:0007669"/>
    <property type="project" value="UniProtKB-SubCell"/>
</dbReference>
<dbReference type="GO" id="GO:0004843">
    <property type="term" value="F:cysteine-type deubiquitinase activity"/>
    <property type="evidence" value="ECO:0000314"/>
    <property type="project" value="MGI"/>
</dbReference>
<dbReference type="GO" id="GO:0008234">
    <property type="term" value="F:cysteine-type peptidase activity"/>
    <property type="evidence" value="ECO:0000315"/>
    <property type="project" value="UniProtKB"/>
</dbReference>
<dbReference type="GO" id="GO:0003677">
    <property type="term" value="F:DNA binding"/>
    <property type="evidence" value="ECO:0007669"/>
    <property type="project" value="InterPro"/>
</dbReference>
<dbReference type="GO" id="GO:1990380">
    <property type="term" value="F:K48-linked deubiquitinase activity"/>
    <property type="evidence" value="ECO:0007669"/>
    <property type="project" value="Ensembl"/>
</dbReference>
<dbReference type="GO" id="GO:0070530">
    <property type="term" value="F:K63-linked polyubiquitin modification-dependent protein binding"/>
    <property type="evidence" value="ECO:0000314"/>
    <property type="project" value="BHF-UCL"/>
</dbReference>
<dbReference type="GO" id="GO:0008270">
    <property type="term" value="F:zinc ion binding"/>
    <property type="evidence" value="ECO:0007669"/>
    <property type="project" value="UniProtKB-KW"/>
</dbReference>
<dbReference type="GO" id="GO:0002250">
    <property type="term" value="P:adaptive immune response"/>
    <property type="evidence" value="ECO:0007669"/>
    <property type="project" value="UniProtKB-KW"/>
</dbReference>
<dbReference type="GO" id="GO:0001701">
    <property type="term" value="P:in utero embryonic development"/>
    <property type="evidence" value="ECO:0000315"/>
    <property type="project" value="MGI"/>
</dbReference>
<dbReference type="GO" id="GO:0002385">
    <property type="term" value="P:mucosal immune response"/>
    <property type="evidence" value="ECO:0000315"/>
    <property type="project" value="UniProtKB"/>
</dbReference>
<dbReference type="GO" id="GO:0043124">
    <property type="term" value="P:negative regulation of canonical NF-kappaB signal transduction"/>
    <property type="evidence" value="ECO:0000315"/>
    <property type="project" value="UniProtKB"/>
</dbReference>
<dbReference type="GO" id="GO:0032717">
    <property type="term" value="P:negative regulation of interleukin-8 production"/>
    <property type="evidence" value="ECO:0007669"/>
    <property type="project" value="Ensembl"/>
</dbReference>
<dbReference type="GO" id="GO:1900181">
    <property type="term" value="P:negative regulation of protein localization to nucleus"/>
    <property type="evidence" value="ECO:0007669"/>
    <property type="project" value="Ensembl"/>
</dbReference>
<dbReference type="GO" id="GO:1904262">
    <property type="term" value="P:negative regulation of TORC1 signaling"/>
    <property type="evidence" value="ECO:0000250"/>
    <property type="project" value="UniProtKB"/>
</dbReference>
<dbReference type="GO" id="GO:0000122">
    <property type="term" value="P:negative regulation of transcription by RNA polymerase II"/>
    <property type="evidence" value="ECO:0000314"/>
    <property type="project" value="ParkinsonsUK-UCL"/>
</dbReference>
<dbReference type="GO" id="GO:1904515">
    <property type="term" value="P:positive regulation of TORC2 signaling"/>
    <property type="evidence" value="ECO:0000250"/>
    <property type="project" value="UniProtKB"/>
</dbReference>
<dbReference type="GO" id="GO:0016579">
    <property type="term" value="P:protein deubiquitination"/>
    <property type="evidence" value="ECO:0000314"/>
    <property type="project" value="MGI"/>
</dbReference>
<dbReference type="GO" id="GO:0035871">
    <property type="term" value="P:protein K11-linked deubiquitination"/>
    <property type="evidence" value="ECO:0000250"/>
    <property type="project" value="UniProtKB"/>
</dbReference>
<dbReference type="GO" id="GO:0071108">
    <property type="term" value="P:protein K48-linked deubiquitination"/>
    <property type="evidence" value="ECO:0000315"/>
    <property type="project" value="UniProtKB"/>
</dbReference>
<dbReference type="GO" id="GO:0070536">
    <property type="term" value="P:protein K63-linked deubiquitination"/>
    <property type="evidence" value="ECO:0000250"/>
    <property type="project" value="UniProtKB"/>
</dbReference>
<dbReference type="GO" id="GO:0006508">
    <property type="term" value="P:proteolysis"/>
    <property type="evidence" value="ECO:0007669"/>
    <property type="project" value="UniProtKB-KW"/>
</dbReference>
<dbReference type="CDD" id="cd22772">
    <property type="entry name" value="OTU_OTUD7B"/>
    <property type="match status" value="1"/>
</dbReference>
<dbReference type="CDD" id="cd14347">
    <property type="entry name" value="UBA_Cezanne_like"/>
    <property type="match status" value="1"/>
</dbReference>
<dbReference type="FunFam" id="1.10.8.10:FF:000017">
    <property type="entry name" value="OTU domain-containing protein 7A"/>
    <property type="match status" value="1"/>
</dbReference>
<dbReference type="FunFam" id="1.20.5.4770:FF:000003">
    <property type="entry name" value="OTU domain-containing protein 7B"/>
    <property type="match status" value="1"/>
</dbReference>
<dbReference type="Gene3D" id="1.20.5.4770">
    <property type="match status" value="1"/>
</dbReference>
<dbReference type="Gene3D" id="1.10.8.10">
    <property type="entry name" value="DNA helicase RuvA subunit, C-terminal domain"/>
    <property type="match status" value="1"/>
</dbReference>
<dbReference type="InterPro" id="IPR051346">
    <property type="entry name" value="OTU_Deubiquitinase"/>
</dbReference>
<dbReference type="InterPro" id="IPR003323">
    <property type="entry name" value="OTU_dom"/>
</dbReference>
<dbReference type="InterPro" id="IPR054109">
    <property type="entry name" value="UBA_8"/>
</dbReference>
<dbReference type="InterPro" id="IPR002653">
    <property type="entry name" value="Znf_A20"/>
</dbReference>
<dbReference type="PANTHER" id="PTHR13367:SF8">
    <property type="entry name" value="OTU DOMAIN-CONTAINING PROTEIN 7B"/>
    <property type="match status" value="1"/>
</dbReference>
<dbReference type="PANTHER" id="PTHR13367">
    <property type="entry name" value="UBIQUITIN THIOESTERASE"/>
    <property type="match status" value="1"/>
</dbReference>
<dbReference type="Pfam" id="PF02338">
    <property type="entry name" value="OTU"/>
    <property type="match status" value="1"/>
</dbReference>
<dbReference type="Pfam" id="PF22566">
    <property type="entry name" value="UBA_8"/>
    <property type="match status" value="1"/>
</dbReference>
<dbReference type="Pfam" id="PF01754">
    <property type="entry name" value="zf-A20"/>
    <property type="match status" value="1"/>
</dbReference>
<dbReference type="SMART" id="SM00259">
    <property type="entry name" value="ZnF_A20"/>
    <property type="match status" value="1"/>
</dbReference>
<dbReference type="SUPFAM" id="SSF57716">
    <property type="entry name" value="Glucocorticoid receptor-like (DNA-binding domain)"/>
    <property type="match status" value="1"/>
</dbReference>
<dbReference type="PROSITE" id="PS50802">
    <property type="entry name" value="OTU"/>
    <property type="match status" value="1"/>
</dbReference>
<dbReference type="PROSITE" id="PS51036">
    <property type="entry name" value="ZF_A20"/>
    <property type="match status" value="1"/>
</dbReference>
<gene>
    <name type="primary">Otud7b</name>
</gene>
<accession>B2RUR8</accession>
<accession>Q8CFS0</accession>
<keyword id="KW-1064">Adaptive immunity</keyword>
<keyword id="KW-0963">Cytoplasm</keyword>
<keyword id="KW-0378">Hydrolase</keyword>
<keyword id="KW-0391">Immunity</keyword>
<keyword id="KW-0479">Metal-binding</keyword>
<keyword id="KW-0539">Nucleus</keyword>
<keyword id="KW-0597">Phosphoprotein</keyword>
<keyword id="KW-0645">Protease</keyword>
<keyword id="KW-1185">Reference proteome</keyword>
<keyword id="KW-0788">Thiol protease</keyword>
<keyword id="KW-0833">Ubl conjugation pathway</keyword>
<keyword id="KW-0862">Zinc</keyword>
<keyword id="KW-0863">Zinc-finger</keyword>
<organism>
    <name type="scientific">Mus musculus</name>
    <name type="common">Mouse</name>
    <dbReference type="NCBI Taxonomy" id="10090"/>
    <lineage>
        <taxon>Eukaryota</taxon>
        <taxon>Metazoa</taxon>
        <taxon>Chordata</taxon>
        <taxon>Craniata</taxon>
        <taxon>Vertebrata</taxon>
        <taxon>Euteleostomi</taxon>
        <taxon>Mammalia</taxon>
        <taxon>Eutheria</taxon>
        <taxon>Euarchontoglires</taxon>
        <taxon>Glires</taxon>
        <taxon>Rodentia</taxon>
        <taxon>Myomorpha</taxon>
        <taxon>Muroidea</taxon>
        <taxon>Muridae</taxon>
        <taxon>Murinae</taxon>
        <taxon>Mus</taxon>
        <taxon>Mus</taxon>
    </lineage>
</organism>